<gene>
    <name type="primary">gluP</name>
    <name type="ordered locus">jhp_1101</name>
</gene>
<accession>Q9ZK41</accession>
<proteinExistence type="inferred from homology"/>
<feature type="chain" id="PRO_0000094507" description="Putative glucose/galactose transporter">
    <location>
        <begin position="1"/>
        <end position="407"/>
    </location>
</feature>
<feature type="transmembrane region" description="Helical" evidence="1">
    <location>
        <begin position="11"/>
        <end position="31"/>
    </location>
</feature>
<feature type="transmembrane region" description="Helical" evidence="1">
    <location>
        <begin position="47"/>
        <end position="67"/>
    </location>
</feature>
<feature type="transmembrane region" description="Helical" evidence="1">
    <location>
        <begin position="70"/>
        <end position="90"/>
    </location>
</feature>
<feature type="transmembrane region" description="Helical" evidence="1">
    <location>
        <begin position="96"/>
        <end position="116"/>
    </location>
</feature>
<feature type="transmembrane region" description="Helical" evidence="1">
    <location>
        <begin position="139"/>
        <end position="159"/>
    </location>
</feature>
<feature type="transmembrane region" description="Helical" evidence="1">
    <location>
        <begin position="180"/>
        <end position="200"/>
    </location>
</feature>
<feature type="transmembrane region" description="Helical" evidence="1">
    <location>
        <begin position="225"/>
        <end position="245"/>
    </location>
</feature>
<feature type="transmembrane region" description="Helical" evidence="1">
    <location>
        <begin position="263"/>
        <end position="283"/>
    </location>
</feature>
<feature type="transmembrane region" description="Helical" evidence="1">
    <location>
        <begin position="300"/>
        <end position="320"/>
    </location>
</feature>
<feature type="transmembrane region" description="Helical" evidence="1">
    <location>
        <begin position="321"/>
        <end position="341"/>
    </location>
</feature>
<feature type="transmembrane region" description="Helical" evidence="1">
    <location>
        <begin position="349"/>
        <end position="369"/>
    </location>
</feature>
<feature type="transmembrane region" description="Helical" evidence="1">
    <location>
        <begin position="378"/>
        <end position="398"/>
    </location>
</feature>
<evidence type="ECO:0000255" key="1"/>
<evidence type="ECO:0000305" key="2"/>
<protein>
    <recommendedName>
        <fullName>Putative glucose/galactose transporter</fullName>
    </recommendedName>
</protein>
<organism>
    <name type="scientific">Helicobacter pylori (strain J99 / ATCC 700824)</name>
    <name type="common">Campylobacter pylori J99</name>
    <dbReference type="NCBI Taxonomy" id="85963"/>
    <lineage>
        <taxon>Bacteria</taxon>
        <taxon>Pseudomonadati</taxon>
        <taxon>Campylobacterota</taxon>
        <taxon>Epsilonproteobacteria</taxon>
        <taxon>Campylobacterales</taxon>
        <taxon>Helicobacteraceae</taxon>
        <taxon>Helicobacter</taxon>
    </lineage>
</organism>
<sequence>MQKTSNTLALGSLTALFFLMGFITVLNDILIPHLKPIFDLTYFEASLIQFCFFGAYFIMGGVFGNVISKIGYPFGVVLGFVITASGCALFYPAAHFGSYGFFLGALFILASGIVCLQTAGNPFVTLLSKGKEARNLVLVQAFNSLGTTLGPIFGSLLIFSATKTSDNLSLIDKLADAKSVQMPYLGLAVFSLLLALVMYLLKLPDVEKEMPKETTQKSLFSHKHFVFGALGIFFYVGGEVAIGSFLVLSFEKLLNLDAQSSAHYLVYYWGGAMVGRFLGSALMNKIAPNKYLAFNALSSIILIALAILIGGKIALFALTFVGFFNSIMFPTIFSLATLNLGHLTSKASGVISMAIVGGALIPPIQGVVTDMLTATESNLLYAYSVPLLCYFYILFFALKGYKQEENS</sequence>
<name>GLUP_HELPJ</name>
<comment type="function">
    <text evidence="2">Intake of glucose and galactose.</text>
</comment>
<comment type="subcellular location">
    <subcellularLocation>
        <location evidence="2">Cell inner membrane</location>
        <topology evidence="2">Multi-pass membrane protein</topology>
    </subcellularLocation>
</comment>
<comment type="similarity">
    <text evidence="2">Belongs to the major facilitator superfamily. FHS transporter (TC 2.A.1.7) family.</text>
</comment>
<reference key="1">
    <citation type="journal article" date="1999" name="Nature">
        <title>Genomic sequence comparison of two unrelated isolates of the human gastric pathogen Helicobacter pylori.</title>
        <authorList>
            <person name="Alm R.A."/>
            <person name="Ling L.-S.L."/>
            <person name="Moir D.T."/>
            <person name="King B.L."/>
            <person name="Brown E.D."/>
            <person name="Doig P.C."/>
            <person name="Smith D.R."/>
            <person name="Noonan B."/>
            <person name="Guild B.C."/>
            <person name="deJonge B.L."/>
            <person name="Carmel G."/>
            <person name="Tummino P.J."/>
            <person name="Caruso A."/>
            <person name="Uria-Nickelsen M."/>
            <person name="Mills D.M."/>
            <person name="Ives C."/>
            <person name="Gibson R."/>
            <person name="Merberg D."/>
            <person name="Mills S.D."/>
            <person name="Jiang Q."/>
            <person name="Taylor D.E."/>
            <person name="Vovis G.F."/>
            <person name="Trust T.J."/>
        </authorList>
    </citation>
    <scope>NUCLEOTIDE SEQUENCE [LARGE SCALE GENOMIC DNA]</scope>
    <source>
        <strain>J99 / ATCC 700824</strain>
    </source>
</reference>
<keyword id="KW-0997">Cell inner membrane</keyword>
<keyword id="KW-1003">Cell membrane</keyword>
<keyword id="KW-0472">Membrane</keyword>
<keyword id="KW-0762">Sugar transport</keyword>
<keyword id="KW-0812">Transmembrane</keyword>
<keyword id="KW-1133">Transmembrane helix</keyword>
<keyword id="KW-0813">Transport</keyword>
<dbReference type="EMBL" id="AE001439">
    <property type="protein sequence ID" value="AAD06674.1"/>
    <property type="molecule type" value="Genomic_DNA"/>
</dbReference>
<dbReference type="PIR" id="A71850">
    <property type="entry name" value="A71850"/>
</dbReference>
<dbReference type="RefSeq" id="WP_001173109.1">
    <property type="nucleotide sequence ID" value="NC_000921.1"/>
</dbReference>
<dbReference type="SMR" id="Q9ZK41"/>
<dbReference type="KEGG" id="hpj:jhp_1101"/>
<dbReference type="PATRIC" id="fig|85963.30.peg.1481"/>
<dbReference type="eggNOG" id="COG0738">
    <property type="taxonomic scope" value="Bacteria"/>
</dbReference>
<dbReference type="Proteomes" id="UP000000804">
    <property type="component" value="Chromosome"/>
</dbReference>
<dbReference type="GO" id="GO:0005886">
    <property type="term" value="C:plasma membrane"/>
    <property type="evidence" value="ECO:0007669"/>
    <property type="project" value="UniProtKB-SubCell"/>
</dbReference>
<dbReference type="GO" id="GO:0055056">
    <property type="term" value="F:D-glucose transmembrane transporter activity"/>
    <property type="evidence" value="ECO:0007669"/>
    <property type="project" value="InterPro"/>
</dbReference>
<dbReference type="GO" id="GO:0005354">
    <property type="term" value="F:galactose transmembrane transporter activity"/>
    <property type="evidence" value="ECO:0007669"/>
    <property type="project" value="InterPro"/>
</dbReference>
<dbReference type="GO" id="GO:1904659">
    <property type="term" value="P:D-glucose transmembrane transport"/>
    <property type="evidence" value="ECO:0007669"/>
    <property type="project" value="InterPro"/>
</dbReference>
<dbReference type="CDD" id="cd17394">
    <property type="entry name" value="MFS_FucP_like"/>
    <property type="match status" value="1"/>
</dbReference>
<dbReference type="Gene3D" id="1.20.1250.20">
    <property type="entry name" value="MFS general substrate transporter like domains"/>
    <property type="match status" value="2"/>
</dbReference>
<dbReference type="InterPro" id="IPR005964">
    <property type="entry name" value="Glc/Gal_transptr_bac"/>
</dbReference>
<dbReference type="InterPro" id="IPR011701">
    <property type="entry name" value="MFS"/>
</dbReference>
<dbReference type="InterPro" id="IPR036259">
    <property type="entry name" value="MFS_trans_sf"/>
</dbReference>
<dbReference type="InterPro" id="IPR050375">
    <property type="entry name" value="MFS_TsgA-like"/>
</dbReference>
<dbReference type="NCBIfam" id="TIGR01272">
    <property type="entry name" value="gluP"/>
    <property type="match status" value="1"/>
</dbReference>
<dbReference type="PANTHER" id="PTHR43702">
    <property type="entry name" value="L-FUCOSE-PROTON SYMPORTER"/>
    <property type="match status" value="1"/>
</dbReference>
<dbReference type="PANTHER" id="PTHR43702:SF3">
    <property type="entry name" value="PROTEIN TSGA"/>
    <property type="match status" value="1"/>
</dbReference>
<dbReference type="Pfam" id="PF07690">
    <property type="entry name" value="MFS_1"/>
    <property type="match status" value="1"/>
</dbReference>
<dbReference type="SUPFAM" id="SSF103473">
    <property type="entry name" value="MFS general substrate transporter"/>
    <property type="match status" value="1"/>
</dbReference>